<organism>
    <name type="scientific">Rhizobium rhizogenes (strain K84 / ATCC BAA-868)</name>
    <name type="common">Agrobacterium radiobacter</name>
    <dbReference type="NCBI Taxonomy" id="311403"/>
    <lineage>
        <taxon>Bacteria</taxon>
        <taxon>Pseudomonadati</taxon>
        <taxon>Pseudomonadota</taxon>
        <taxon>Alphaproteobacteria</taxon>
        <taxon>Hyphomicrobiales</taxon>
        <taxon>Rhizobiaceae</taxon>
        <taxon>Rhizobium/Agrobacterium group</taxon>
        <taxon>Rhizobium</taxon>
    </lineage>
</organism>
<name>IHFA_RHIR8</name>
<reference key="1">
    <citation type="journal article" date="2009" name="J. Bacteriol.">
        <title>Genome sequences of three Agrobacterium biovars help elucidate the evolution of multichromosome genomes in bacteria.</title>
        <authorList>
            <person name="Slater S.C."/>
            <person name="Goldman B.S."/>
            <person name="Goodner B."/>
            <person name="Setubal J.C."/>
            <person name="Farrand S.K."/>
            <person name="Nester E.W."/>
            <person name="Burr T.J."/>
            <person name="Banta L."/>
            <person name="Dickerman A.W."/>
            <person name="Paulsen I."/>
            <person name="Otten L."/>
            <person name="Suen G."/>
            <person name="Welch R."/>
            <person name="Almeida N.F."/>
            <person name="Arnold F."/>
            <person name="Burton O.T."/>
            <person name="Du Z."/>
            <person name="Ewing A."/>
            <person name="Godsy E."/>
            <person name="Heisel S."/>
            <person name="Houmiel K.L."/>
            <person name="Jhaveri J."/>
            <person name="Lu J."/>
            <person name="Miller N.M."/>
            <person name="Norton S."/>
            <person name="Chen Q."/>
            <person name="Phoolcharoen W."/>
            <person name="Ohlin V."/>
            <person name="Ondrusek D."/>
            <person name="Pride N."/>
            <person name="Stricklin S.L."/>
            <person name="Sun J."/>
            <person name="Wheeler C."/>
            <person name="Wilson L."/>
            <person name="Zhu H."/>
            <person name="Wood D.W."/>
        </authorList>
    </citation>
    <scope>NUCLEOTIDE SEQUENCE [LARGE SCALE GENOMIC DNA]</scope>
    <source>
        <strain>K84 / ATCC BAA-868</strain>
    </source>
</reference>
<protein>
    <recommendedName>
        <fullName evidence="1">Integration host factor subunit alpha</fullName>
        <shortName evidence="1">IHF-alpha</shortName>
    </recommendedName>
</protein>
<comment type="function">
    <text evidence="1">This protein is one of the two subunits of integration host factor, a specific DNA-binding protein that functions in genetic recombination as well as in transcriptional and translational control.</text>
</comment>
<comment type="subunit">
    <text evidence="1">Heterodimer of an alpha and a beta chain.</text>
</comment>
<comment type="similarity">
    <text evidence="1">Belongs to the bacterial histone-like protein family.</text>
</comment>
<dbReference type="EMBL" id="CP000628">
    <property type="protein sequence ID" value="ACM26127.1"/>
    <property type="molecule type" value="Genomic_DNA"/>
</dbReference>
<dbReference type="RefSeq" id="WP_007692773.1">
    <property type="nucleotide sequence ID" value="NC_011985.1"/>
</dbReference>
<dbReference type="SMR" id="B9JCZ0"/>
<dbReference type="STRING" id="311403.Arad_1773"/>
<dbReference type="KEGG" id="ara:Arad_1773"/>
<dbReference type="eggNOG" id="COG0776">
    <property type="taxonomic scope" value="Bacteria"/>
</dbReference>
<dbReference type="HOGENOM" id="CLU_105066_1_1_5"/>
<dbReference type="Proteomes" id="UP000001600">
    <property type="component" value="Chromosome 1"/>
</dbReference>
<dbReference type="GO" id="GO:0005829">
    <property type="term" value="C:cytosol"/>
    <property type="evidence" value="ECO:0007669"/>
    <property type="project" value="TreeGrafter"/>
</dbReference>
<dbReference type="GO" id="GO:0003677">
    <property type="term" value="F:DNA binding"/>
    <property type="evidence" value="ECO:0007669"/>
    <property type="project" value="UniProtKB-UniRule"/>
</dbReference>
<dbReference type="GO" id="GO:0030527">
    <property type="term" value="F:structural constituent of chromatin"/>
    <property type="evidence" value="ECO:0007669"/>
    <property type="project" value="InterPro"/>
</dbReference>
<dbReference type="GO" id="GO:0006310">
    <property type="term" value="P:DNA recombination"/>
    <property type="evidence" value="ECO:0007669"/>
    <property type="project" value="UniProtKB-UniRule"/>
</dbReference>
<dbReference type="GO" id="GO:0009893">
    <property type="term" value="P:positive regulation of metabolic process"/>
    <property type="evidence" value="ECO:0007669"/>
    <property type="project" value="UniProtKB-ARBA"/>
</dbReference>
<dbReference type="GO" id="GO:0006355">
    <property type="term" value="P:regulation of DNA-templated transcription"/>
    <property type="evidence" value="ECO:0007669"/>
    <property type="project" value="UniProtKB-UniRule"/>
</dbReference>
<dbReference type="GO" id="GO:0006417">
    <property type="term" value="P:regulation of translation"/>
    <property type="evidence" value="ECO:0007669"/>
    <property type="project" value="UniProtKB-UniRule"/>
</dbReference>
<dbReference type="CDD" id="cd13835">
    <property type="entry name" value="IHF_A"/>
    <property type="match status" value="1"/>
</dbReference>
<dbReference type="Gene3D" id="4.10.520.10">
    <property type="entry name" value="IHF-like DNA-binding proteins"/>
    <property type="match status" value="1"/>
</dbReference>
<dbReference type="HAMAP" id="MF_00380">
    <property type="entry name" value="IHF_alpha"/>
    <property type="match status" value="1"/>
</dbReference>
<dbReference type="InterPro" id="IPR000119">
    <property type="entry name" value="Hist_DNA-bd"/>
</dbReference>
<dbReference type="InterPro" id="IPR020816">
    <property type="entry name" value="Histone-like_DNA-bd_CS"/>
</dbReference>
<dbReference type="InterPro" id="IPR010992">
    <property type="entry name" value="IHF-like_DNA-bd_dom_sf"/>
</dbReference>
<dbReference type="InterPro" id="IPR005684">
    <property type="entry name" value="IHF_alpha"/>
</dbReference>
<dbReference type="NCBIfam" id="TIGR00987">
    <property type="entry name" value="himA"/>
    <property type="match status" value="1"/>
</dbReference>
<dbReference type="NCBIfam" id="NF001401">
    <property type="entry name" value="PRK00285.1"/>
    <property type="match status" value="1"/>
</dbReference>
<dbReference type="PANTHER" id="PTHR33175">
    <property type="entry name" value="DNA-BINDING PROTEIN HU"/>
    <property type="match status" value="1"/>
</dbReference>
<dbReference type="PANTHER" id="PTHR33175:SF2">
    <property type="entry name" value="INTEGRATION HOST FACTOR SUBUNIT ALPHA"/>
    <property type="match status" value="1"/>
</dbReference>
<dbReference type="Pfam" id="PF00216">
    <property type="entry name" value="Bac_DNA_binding"/>
    <property type="match status" value="1"/>
</dbReference>
<dbReference type="PRINTS" id="PR01727">
    <property type="entry name" value="DNABINDINGHU"/>
</dbReference>
<dbReference type="SMART" id="SM00411">
    <property type="entry name" value="BHL"/>
    <property type="match status" value="1"/>
</dbReference>
<dbReference type="SUPFAM" id="SSF47729">
    <property type="entry name" value="IHF-like DNA-binding proteins"/>
    <property type="match status" value="1"/>
</dbReference>
<dbReference type="PROSITE" id="PS00045">
    <property type="entry name" value="HISTONE_LIKE"/>
    <property type="match status" value="1"/>
</dbReference>
<evidence type="ECO:0000255" key="1">
    <source>
        <dbReference type="HAMAP-Rule" id="MF_00380"/>
    </source>
</evidence>
<proteinExistence type="inferred from homology"/>
<feature type="chain" id="PRO_1000190415" description="Integration host factor subunit alpha">
    <location>
        <begin position="1"/>
        <end position="112"/>
    </location>
</feature>
<accession>B9JCZ0</accession>
<keyword id="KW-0233">DNA recombination</keyword>
<keyword id="KW-0238">DNA-binding</keyword>
<keyword id="KW-0804">Transcription</keyword>
<keyword id="KW-0805">Transcription regulation</keyword>
<keyword id="KW-0810">Translation regulation</keyword>
<gene>
    <name evidence="1" type="primary">ihfA</name>
    <name evidence="1" type="synonym">himA</name>
    <name type="ordered locus">Arad_1773</name>
</gene>
<sequence>MTGKTVTRADLAESVFRKVGLSRTESAELVETVIDEICNAIVRGETVKLSSFATFQVRDKNERIGRNPKTGEEVPISPRRVMTFKASNVLKTRILKAHASRKAKARPANPAS</sequence>